<keyword id="KW-0028">Amino-acid biosynthesis</keyword>
<keyword id="KW-0997">Cell inner membrane</keyword>
<keyword id="KW-1003">Cell membrane</keyword>
<keyword id="KW-0198">Cysteine biosynthesis</keyword>
<keyword id="KW-0472">Membrane</keyword>
<keyword id="KW-0764">Sulfate transport</keyword>
<keyword id="KW-0812">Transmembrane</keyword>
<keyword id="KW-1133">Transmembrane helix</keyword>
<keyword id="KW-0813">Transport</keyword>
<organism>
    <name type="scientific">Salmonella paratyphi A (strain AKU_12601)</name>
    <dbReference type="NCBI Taxonomy" id="554290"/>
    <lineage>
        <taxon>Bacteria</taxon>
        <taxon>Pseudomonadati</taxon>
        <taxon>Pseudomonadota</taxon>
        <taxon>Gammaproteobacteria</taxon>
        <taxon>Enterobacterales</taxon>
        <taxon>Enterobacteriaceae</taxon>
        <taxon>Salmonella</taxon>
    </lineage>
</organism>
<proteinExistence type="inferred from homology"/>
<dbReference type="EMBL" id="FM200053">
    <property type="protein sequence ID" value="CAR58533.1"/>
    <property type="molecule type" value="Genomic_DNA"/>
</dbReference>
<dbReference type="RefSeq" id="WP_000255008.1">
    <property type="nucleotide sequence ID" value="NC_011147.1"/>
</dbReference>
<dbReference type="SMR" id="B5BB70"/>
<dbReference type="KEGG" id="sek:SSPA0409"/>
<dbReference type="HOGENOM" id="CLU_070331_1_0_6"/>
<dbReference type="Proteomes" id="UP000001869">
    <property type="component" value="Chromosome"/>
</dbReference>
<dbReference type="GO" id="GO:0005886">
    <property type="term" value="C:plasma membrane"/>
    <property type="evidence" value="ECO:0007669"/>
    <property type="project" value="UniProtKB-SubCell"/>
</dbReference>
<dbReference type="GO" id="GO:0009675">
    <property type="term" value="F:high-affinity sulfate:proton symporter activity"/>
    <property type="evidence" value="ECO:0007669"/>
    <property type="project" value="TreeGrafter"/>
</dbReference>
<dbReference type="GO" id="GO:0019344">
    <property type="term" value="P:cysteine biosynthetic process"/>
    <property type="evidence" value="ECO:0007669"/>
    <property type="project" value="UniProtKB-UniRule"/>
</dbReference>
<dbReference type="GO" id="GO:0000103">
    <property type="term" value="P:sulfate assimilation"/>
    <property type="evidence" value="ECO:0007669"/>
    <property type="project" value="InterPro"/>
</dbReference>
<dbReference type="HAMAP" id="MF_00468">
    <property type="entry name" value="CysZ"/>
    <property type="match status" value="1"/>
</dbReference>
<dbReference type="InterPro" id="IPR050480">
    <property type="entry name" value="CysZ_sulfate_transptr"/>
</dbReference>
<dbReference type="InterPro" id="IPR022985">
    <property type="entry name" value="Sulfate_CysZ"/>
</dbReference>
<dbReference type="NCBIfam" id="NF003433">
    <property type="entry name" value="PRK04949.1"/>
    <property type="match status" value="1"/>
</dbReference>
<dbReference type="PANTHER" id="PTHR37468">
    <property type="entry name" value="SULFATE TRANSPORTER CYSZ"/>
    <property type="match status" value="1"/>
</dbReference>
<dbReference type="PANTHER" id="PTHR37468:SF1">
    <property type="entry name" value="SULFATE TRANSPORTER CYSZ"/>
    <property type="match status" value="1"/>
</dbReference>
<dbReference type="Pfam" id="PF07264">
    <property type="entry name" value="EI24"/>
    <property type="match status" value="1"/>
</dbReference>
<sequence>MVSSSTTVPRSGVYYFSQGWKLVTLPGIRRFVILPLLVNIVLMGGAFWWLFTQLDAWIPSLMSHVPDWLQWLSYLLWPIAVISVLLVFGYFFSTLANWIAAPFNGLLAEQLEARLTGATPPDTGILGIMKDVPRIMKREWQKLAWYLPRAIVLLVLYFIPGIGQTIAPVLWFLFSAWMLAIQYCDYPFDNHKVPFKTMRAALRTQKVANMQFGALTSLFTMIPVLNLFIMPVAVCGATAMWVDCWRAKHALWK</sequence>
<reference key="1">
    <citation type="journal article" date="2009" name="BMC Genomics">
        <title>Pseudogene accumulation in the evolutionary histories of Salmonella enterica serovars Paratyphi A and Typhi.</title>
        <authorList>
            <person name="Holt K.E."/>
            <person name="Thomson N.R."/>
            <person name="Wain J."/>
            <person name="Langridge G.C."/>
            <person name="Hasan R."/>
            <person name="Bhutta Z.A."/>
            <person name="Quail M.A."/>
            <person name="Norbertczak H."/>
            <person name="Walker D."/>
            <person name="Simmonds M."/>
            <person name="White B."/>
            <person name="Bason N."/>
            <person name="Mungall K."/>
            <person name="Dougan G."/>
            <person name="Parkhill J."/>
        </authorList>
    </citation>
    <scope>NUCLEOTIDE SEQUENCE [LARGE SCALE GENOMIC DNA]</scope>
    <source>
        <strain>AKU_12601</strain>
    </source>
</reference>
<accession>B5BB70</accession>
<feature type="chain" id="PRO_1000125504" description="Sulfate transporter CysZ">
    <location>
        <begin position="1"/>
        <end position="253"/>
    </location>
</feature>
<feature type="transmembrane region" description="Helical" evidence="1">
    <location>
        <begin position="31"/>
        <end position="51"/>
    </location>
</feature>
<feature type="transmembrane region" description="Helical" evidence="1">
    <location>
        <begin position="72"/>
        <end position="92"/>
    </location>
</feature>
<feature type="transmembrane region" description="Helical" evidence="1">
    <location>
        <begin position="151"/>
        <end position="171"/>
    </location>
</feature>
<feature type="transmembrane region" description="Helical" evidence="1">
    <location>
        <begin position="222"/>
        <end position="242"/>
    </location>
</feature>
<name>CYSZ_SALPK</name>
<evidence type="ECO:0000255" key="1">
    <source>
        <dbReference type="HAMAP-Rule" id="MF_00468"/>
    </source>
</evidence>
<comment type="function">
    <text evidence="1">High affinity, high specificity proton-dependent sulfate transporter, which mediates sulfate uptake. Provides the sulfur source for the cysteine synthesis pathway.</text>
</comment>
<comment type="subcellular location">
    <subcellularLocation>
        <location evidence="1">Cell inner membrane</location>
        <topology evidence="1">Multi-pass membrane protein</topology>
    </subcellularLocation>
</comment>
<comment type="similarity">
    <text evidence="1">Belongs to the CysZ family.</text>
</comment>
<protein>
    <recommendedName>
        <fullName evidence="1">Sulfate transporter CysZ</fullName>
    </recommendedName>
</protein>
<gene>
    <name evidence="1" type="primary">cysZ</name>
    <name type="ordered locus">SSPA0409</name>
</gene>